<feature type="chain" id="PRO_0000076291" description="Polyhomeotic-like protein 3">
    <location>
        <begin position="1"/>
        <end position="981"/>
    </location>
</feature>
<feature type="domain" description="SAM" evidence="3">
    <location>
        <begin position="917"/>
        <end position="981"/>
    </location>
</feature>
<feature type="zinc finger region" description="FCS-type" evidence="4">
    <location>
        <begin position="774"/>
        <end position="808"/>
    </location>
</feature>
<feature type="region of interest" description="Disordered" evidence="5">
    <location>
        <begin position="1"/>
        <end position="33"/>
    </location>
</feature>
<feature type="region of interest" description="Disordered" evidence="5">
    <location>
        <begin position="102"/>
        <end position="127"/>
    </location>
</feature>
<feature type="region of interest" description="Disordered" evidence="5">
    <location>
        <begin position="224"/>
        <end position="280"/>
    </location>
</feature>
<feature type="region of interest" description="Disordered" evidence="5">
    <location>
        <begin position="307"/>
        <end position="407"/>
    </location>
</feature>
<feature type="region of interest" description="Disordered" evidence="5">
    <location>
        <begin position="650"/>
        <end position="690"/>
    </location>
</feature>
<feature type="region of interest" description="Disordered" evidence="5">
    <location>
        <begin position="825"/>
        <end position="844"/>
    </location>
</feature>
<feature type="region of interest" description="Disordered" evidence="5">
    <location>
        <begin position="863"/>
        <end position="888"/>
    </location>
</feature>
<feature type="short sequence motif" description="HD1">
    <location>
        <begin position="689"/>
        <end position="718"/>
    </location>
</feature>
<feature type="compositionally biased region" description="Low complexity" evidence="5">
    <location>
        <begin position="1"/>
        <end position="28"/>
    </location>
</feature>
<feature type="compositionally biased region" description="Polar residues" evidence="5">
    <location>
        <begin position="224"/>
        <end position="255"/>
    </location>
</feature>
<feature type="compositionally biased region" description="Basic and acidic residues" evidence="5">
    <location>
        <begin position="256"/>
        <end position="266"/>
    </location>
</feature>
<feature type="compositionally biased region" description="Low complexity" evidence="5">
    <location>
        <begin position="321"/>
        <end position="340"/>
    </location>
</feature>
<feature type="compositionally biased region" description="Polar residues" evidence="5">
    <location>
        <begin position="360"/>
        <end position="373"/>
    </location>
</feature>
<feature type="compositionally biased region" description="Low complexity" evidence="5">
    <location>
        <begin position="381"/>
        <end position="395"/>
    </location>
</feature>
<feature type="compositionally biased region" description="Low complexity" evidence="5">
    <location>
        <begin position="667"/>
        <end position="686"/>
    </location>
</feature>
<feature type="binding site" evidence="4">
    <location>
        <position position="783"/>
    </location>
    <ligand>
        <name>Zn(2+)</name>
        <dbReference type="ChEBI" id="CHEBI:29105"/>
    </ligand>
</feature>
<feature type="binding site" evidence="4">
    <location>
        <position position="786"/>
    </location>
    <ligand>
        <name>Zn(2+)</name>
        <dbReference type="ChEBI" id="CHEBI:29105"/>
    </ligand>
</feature>
<feature type="binding site" evidence="4">
    <location>
        <position position="802"/>
    </location>
    <ligand>
        <name>Zn(2+)</name>
        <dbReference type="ChEBI" id="CHEBI:29105"/>
    </ligand>
</feature>
<feature type="binding site" evidence="4">
    <location>
        <position position="806"/>
    </location>
    <ligand>
        <name>Zn(2+)</name>
        <dbReference type="ChEBI" id="CHEBI:29105"/>
    </ligand>
</feature>
<feature type="modified residue" description="Phosphoserine" evidence="10">
    <location>
        <position position="231"/>
    </location>
</feature>
<feature type="modified residue" description="Phosphoserine" evidence="2">
    <location>
        <position position="261"/>
    </location>
</feature>
<feature type="modified residue" description="Phosphoserine" evidence="2">
    <location>
        <position position="269"/>
    </location>
</feature>
<feature type="modified residue" description="Phosphoserine" evidence="2">
    <location>
        <position position="312"/>
    </location>
</feature>
<feature type="modified residue" description="Phosphothreonine" evidence="9 10">
    <location>
        <position position="607"/>
    </location>
</feature>
<feature type="modified residue" description="Phosphothreonine" evidence="2">
    <location>
        <position position="612"/>
    </location>
</feature>
<feature type="modified residue" description="Phosphoserine" evidence="9 10">
    <location>
        <position position="614"/>
    </location>
</feature>
<feature type="modified residue" description="Phosphoserine" evidence="2">
    <location>
        <position position="759"/>
    </location>
</feature>
<feature type="modified residue" description="Phosphoserine" evidence="10">
    <location>
        <position position="760"/>
    </location>
</feature>
<feature type="cross-link" description="Glycyl lysine isopeptide (Lys-Gly) (interchain with G-Cter in SUMO2)" evidence="2">
    <location>
        <position position="689"/>
    </location>
</feature>
<feature type="cross-link" description="Glycyl lysine isopeptide (Lys-Gly) (interchain with G-Cter in SUMO2)" evidence="2">
    <location>
        <position position="730"/>
    </location>
</feature>
<feature type="cross-link" description="Glycyl lysine isopeptide (Lys-Gly) (interchain with G-Cter in SUMO2)" evidence="2">
    <location>
        <position position="808"/>
    </location>
</feature>
<feature type="splice variant" id="VSP_016772" description="In isoform 2." evidence="7">
    <original>M</original>
    <variation>MAEAEFKDHSTAM</variation>
    <location>
        <position position="1"/>
    </location>
</feature>
<feature type="splice variant" id="VSP_016773" description="In isoform 2." evidence="7">
    <location>
        <begin position="178"/>
        <end position="210"/>
    </location>
</feature>
<feature type="splice variant" id="VSP_016774" description="In isoform 2." evidence="7">
    <original>RSSLLIEQPVKKRPLLD</original>
    <variation>QKLICVFKIIFSDTTLS</variation>
    <location>
        <begin position="720"/>
        <end position="736"/>
    </location>
</feature>
<feature type="splice variant" id="VSP_016775" description="In isoform 2." evidence="7">
    <location>
        <begin position="737"/>
        <end position="981"/>
    </location>
</feature>
<feature type="sequence conflict" description="In Ref. 1; CAC93885." evidence="8" ref="1">
    <original>S</original>
    <variation>I</variation>
    <location>
        <position position="147"/>
    </location>
</feature>
<feature type="sequence conflict" description="In Ref. 2; BAE38687." evidence="8" ref="2">
    <original>N</original>
    <variation>T</variation>
    <location>
        <position position="384"/>
    </location>
</feature>
<feature type="sequence conflict" description="In Ref. 2; BAE38687." evidence="8" ref="2">
    <original>A</original>
    <variation>T</variation>
    <location>
        <position position="437"/>
    </location>
</feature>
<feature type="sequence conflict" description="In Ref. 2; BAE38687." evidence="8" ref="2">
    <original>V</original>
    <variation>G</variation>
    <location>
        <position position="534"/>
    </location>
</feature>
<feature type="sequence conflict" description="In Ref. 1; CAC93885." evidence="8" ref="1">
    <original>S</original>
    <variation>F</variation>
    <location>
        <position position="867"/>
    </location>
</feature>
<dbReference type="EMBL" id="AJ414610">
    <property type="protein sequence ID" value="CAC93885.1"/>
    <property type="molecule type" value="mRNA"/>
</dbReference>
<dbReference type="EMBL" id="AK166296">
    <property type="protein sequence ID" value="BAE38687.1"/>
    <property type="molecule type" value="mRNA"/>
</dbReference>
<dbReference type="EMBL" id="BC132533">
    <property type="protein sequence ID" value="AAI32534.1"/>
    <property type="molecule type" value="mRNA"/>
</dbReference>
<dbReference type="CCDS" id="CCDS17288.1">
    <molecule id="Q8CHP6-1"/>
</dbReference>
<dbReference type="RefSeq" id="NP_001159426.1">
    <property type="nucleotide sequence ID" value="NM_001165954.1"/>
</dbReference>
<dbReference type="RefSeq" id="NP_700470.2">
    <molecule id="Q8CHP6-1"/>
    <property type="nucleotide sequence ID" value="NM_153421.2"/>
</dbReference>
<dbReference type="SMR" id="Q8CHP6"/>
<dbReference type="BioGRID" id="232356">
    <property type="interactions" value="7"/>
</dbReference>
<dbReference type="FunCoup" id="Q8CHP6">
    <property type="interactions" value="4164"/>
</dbReference>
<dbReference type="IntAct" id="Q8CHP6">
    <property type="interactions" value="2"/>
</dbReference>
<dbReference type="STRING" id="10090.ENSMUSP00000130142"/>
<dbReference type="GlyGen" id="Q8CHP6">
    <property type="glycosylation" value="8 sites, 2 N-linked glycans (2 sites), 1 O-linked glycan (5 sites)"/>
</dbReference>
<dbReference type="iPTMnet" id="Q8CHP6"/>
<dbReference type="PhosphoSitePlus" id="Q8CHP6"/>
<dbReference type="jPOST" id="Q8CHP6"/>
<dbReference type="PaxDb" id="10090-ENSMUSP00000130142"/>
<dbReference type="ProteomicsDB" id="287697">
    <molecule id="Q8CHP6-1"/>
</dbReference>
<dbReference type="ProteomicsDB" id="287698">
    <molecule id="Q8CHP6-2"/>
</dbReference>
<dbReference type="Pumba" id="Q8CHP6"/>
<dbReference type="Antibodypedia" id="33708">
    <property type="antibodies" value="111 antibodies from 24 providers"/>
</dbReference>
<dbReference type="DNASU" id="241915"/>
<dbReference type="Ensembl" id="ENSMUST00000129817.9">
    <molecule id="Q8CHP6-1"/>
    <property type="protein sequence ID" value="ENSMUSP00000114916.3"/>
    <property type="gene ID" value="ENSMUSG00000037652.16"/>
</dbReference>
<dbReference type="Ensembl" id="ENSMUST00000168645.8">
    <molecule id="Q8CHP6-1"/>
    <property type="protein sequence ID" value="ENSMUSP00000130142.2"/>
    <property type="gene ID" value="ENSMUSG00000037652.16"/>
</dbReference>
<dbReference type="GeneID" id="241915"/>
<dbReference type="KEGG" id="mmu:241915"/>
<dbReference type="UCSC" id="uc008ovl.2">
    <molecule id="Q8CHP6-1"/>
    <property type="organism name" value="mouse"/>
</dbReference>
<dbReference type="AGR" id="MGI:2181434"/>
<dbReference type="CTD" id="80012"/>
<dbReference type="MGI" id="MGI:2181434">
    <property type="gene designation" value="Phc3"/>
</dbReference>
<dbReference type="VEuPathDB" id="HostDB:ENSMUSG00000037652"/>
<dbReference type="eggNOG" id="ENOG502QS5Q">
    <property type="taxonomic scope" value="Eukaryota"/>
</dbReference>
<dbReference type="GeneTree" id="ENSGT00940000154964"/>
<dbReference type="InParanoid" id="Q8CHP6"/>
<dbReference type="OMA" id="DRHAVQX"/>
<dbReference type="OrthoDB" id="2390104at2759"/>
<dbReference type="PhylomeDB" id="Q8CHP6"/>
<dbReference type="TreeFam" id="TF331299"/>
<dbReference type="Reactome" id="R-MMU-3108214">
    <property type="pathway name" value="SUMOylation of DNA damage response and repair proteins"/>
</dbReference>
<dbReference type="Reactome" id="R-MMU-3899300">
    <property type="pathway name" value="SUMOylation of transcription cofactors"/>
</dbReference>
<dbReference type="Reactome" id="R-MMU-4551638">
    <property type="pathway name" value="SUMOylation of chromatin organization proteins"/>
</dbReference>
<dbReference type="Reactome" id="R-MMU-4570464">
    <property type="pathway name" value="SUMOylation of RNA binding proteins"/>
</dbReference>
<dbReference type="Reactome" id="R-MMU-8939243">
    <property type="pathway name" value="RUNX1 interacts with co-factors whose precise effect on RUNX1 targets is not known"/>
</dbReference>
<dbReference type="Reactome" id="R-MMU-8953750">
    <property type="pathway name" value="Transcriptional Regulation by E2F6"/>
</dbReference>
<dbReference type="BioGRID-ORCS" id="241915">
    <property type="hits" value="5 hits in 81 CRISPR screens"/>
</dbReference>
<dbReference type="ChiTaRS" id="Phc3">
    <property type="organism name" value="mouse"/>
</dbReference>
<dbReference type="PRO" id="PR:Q8CHP6"/>
<dbReference type="Proteomes" id="UP000000589">
    <property type="component" value="Chromosome 3"/>
</dbReference>
<dbReference type="RNAct" id="Q8CHP6">
    <property type="molecule type" value="protein"/>
</dbReference>
<dbReference type="Bgee" id="ENSMUSG00000037652">
    <property type="expression patterns" value="Expressed in otolith organ and 227 other cell types or tissues"/>
</dbReference>
<dbReference type="ExpressionAtlas" id="Q8CHP6">
    <property type="expression patterns" value="baseline and differential"/>
</dbReference>
<dbReference type="GO" id="GO:0005654">
    <property type="term" value="C:nucleoplasm"/>
    <property type="evidence" value="ECO:0007669"/>
    <property type="project" value="Ensembl"/>
</dbReference>
<dbReference type="GO" id="GO:0005634">
    <property type="term" value="C:nucleus"/>
    <property type="evidence" value="ECO:0000266"/>
    <property type="project" value="MGI"/>
</dbReference>
<dbReference type="GO" id="GO:0031519">
    <property type="term" value="C:PcG protein complex"/>
    <property type="evidence" value="ECO:0000314"/>
    <property type="project" value="MGI"/>
</dbReference>
<dbReference type="GO" id="GO:0035102">
    <property type="term" value="C:PRC1 complex"/>
    <property type="evidence" value="ECO:0000250"/>
    <property type="project" value="UniProtKB"/>
</dbReference>
<dbReference type="GO" id="GO:0003677">
    <property type="term" value="F:DNA binding"/>
    <property type="evidence" value="ECO:0007669"/>
    <property type="project" value="UniProtKB-KW"/>
</dbReference>
<dbReference type="GO" id="GO:0008270">
    <property type="term" value="F:zinc ion binding"/>
    <property type="evidence" value="ECO:0007669"/>
    <property type="project" value="UniProtKB-KW"/>
</dbReference>
<dbReference type="CDD" id="cd09577">
    <property type="entry name" value="SAM_Ph1_2_3"/>
    <property type="match status" value="1"/>
</dbReference>
<dbReference type="FunFam" id="1.10.150.50:FF:000011">
    <property type="entry name" value="Polyhomeotic-like protein 2 isoform 1"/>
    <property type="match status" value="1"/>
</dbReference>
<dbReference type="FunFam" id="3.30.60.160:FF:000002">
    <property type="entry name" value="Polyhomeotic-like protein 2 isoform 1"/>
    <property type="match status" value="1"/>
</dbReference>
<dbReference type="Gene3D" id="3.30.60.160">
    <property type="match status" value="1"/>
</dbReference>
<dbReference type="Gene3D" id="1.10.150.50">
    <property type="entry name" value="Transcription Factor, Ets-1"/>
    <property type="match status" value="1"/>
</dbReference>
<dbReference type="InterPro" id="IPR050548">
    <property type="entry name" value="PcG_chromatin_remod_factors"/>
</dbReference>
<dbReference type="InterPro" id="IPR001660">
    <property type="entry name" value="SAM"/>
</dbReference>
<dbReference type="InterPro" id="IPR013761">
    <property type="entry name" value="SAM/pointed_sf"/>
</dbReference>
<dbReference type="InterPro" id="IPR012313">
    <property type="entry name" value="Znf_FCS"/>
</dbReference>
<dbReference type="InterPro" id="IPR038603">
    <property type="entry name" value="Znf_FCS_sf"/>
</dbReference>
<dbReference type="PANTHER" id="PTHR12247">
    <property type="entry name" value="POLYCOMB GROUP PROTEIN"/>
    <property type="match status" value="1"/>
</dbReference>
<dbReference type="PANTHER" id="PTHR12247:SF88">
    <property type="entry name" value="POLYHOMEOTIC-LIKE PROTEIN 3"/>
    <property type="match status" value="1"/>
</dbReference>
<dbReference type="Pfam" id="PF00536">
    <property type="entry name" value="SAM_1"/>
    <property type="match status" value="1"/>
</dbReference>
<dbReference type="Pfam" id="PF21319">
    <property type="entry name" value="zf-FCS_1"/>
    <property type="match status" value="1"/>
</dbReference>
<dbReference type="SMART" id="SM00454">
    <property type="entry name" value="SAM"/>
    <property type="match status" value="1"/>
</dbReference>
<dbReference type="SUPFAM" id="SSF47769">
    <property type="entry name" value="SAM/Pointed domain"/>
    <property type="match status" value="1"/>
</dbReference>
<dbReference type="PROSITE" id="PS50105">
    <property type="entry name" value="SAM_DOMAIN"/>
    <property type="match status" value="1"/>
</dbReference>
<dbReference type="PROSITE" id="PS51024">
    <property type="entry name" value="ZF_FCS"/>
    <property type="match status" value="1"/>
</dbReference>
<organism>
    <name type="scientific">Mus musculus</name>
    <name type="common">Mouse</name>
    <dbReference type="NCBI Taxonomy" id="10090"/>
    <lineage>
        <taxon>Eukaryota</taxon>
        <taxon>Metazoa</taxon>
        <taxon>Chordata</taxon>
        <taxon>Craniata</taxon>
        <taxon>Vertebrata</taxon>
        <taxon>Euteleostomi</taxon>
        <taxon>Mammalia</taxon>
        <taxon>Eutheria</taxon>
        <taxon>Euarchontoglires</taxon>
        <taxon>Glires</taxon>
        <taxon>Rodentia</taxon>
        <taxon>Myomorpha</taxon>
        <taxon>Muroidea</taxon>
        <taxon>Muridae</taxon>
        <taxon>Murinae</taxon>
        <taxon>Mus</taxon>
        <taxon>Mus</taxon>
    </lineage>
</organism>
<keyword id="KW-0025">Alternative splicing</keyword>
<keyword id="KW-0217">Developmental protein</keyword>
<keyword id="KW-0238">DNA-binding</keyword>
<keyword id="KW-1017">Isopeptide bond</keyword>
<keyword id="KW-0479">Metal-binding</keyword>
<keyword id="KW-0539">Nucleus</keyword>
<keyword id="KW-0597">Phosphoprotein</keyword>
<keyword id="KW-1185">Reference proteome</keyword>
<keyword id="KW-0832">Ubl conjugation</keyword>
<keyword id="KW-0862">Zinc</keyword>
<keyword id="KW-0863">Zinc-finger</keyword>
<proteinExistence type="evidence at protein level"/>
<protein>
    <recommendedName>
        <fullName>Polyhomeotic-like protein 3</fullName>
    </recommendedName>
</protein>
<gene>
    <name type="primary">Phc3</name>
</gene>
<comment type="function">
    <text evidence="1">Component of a Polycomb group (PcG) multiprotein PRC1-like complex, a complex class required to maintain the transcriptionally repressive state of many genes, including Hox genes, throughout development. PcG PRC1 complex acts via chromatin remodeling and modification of histones; it mediates monoubiquitination of histone H2A 'Lys-119', rendering chromatin heritably changed in its expressibility (By similarity).</text>
</comment>
<comment type="subunit">
    <text evidence="1">Component of a PRC1-like complex.</text>
</comment>
<comment type="subcellular location">
    <subcellularLocation>
        <location evidence="1">Nucleus</location>
    </subcellularLocation>
</comment>
<comment type="alternative products">
    <event type="alternative splicing"/>
    <isoform>
        <id>Q8CHP6-1</id>
        <name>1</name>
        <sequence type="displayed"/>
    </isoform>
    <isoform>
        <id>Q8CHP6-2</id>
        <name>2</name>
        <sequence type="described" ref="VSP_016772 VSP_016773 VSP_016774 VSP_016775"/>
    </isoform>
</comment>
<comment type="tissue specificity">
    <text evidence="6">Ubiquitous expression.</text>
</comment>
<sequence length="981" mass="105353">MDSEPSSGTSVSTTASSTTTTTITTSSSRMQQPQISVYSGSDRHAVQVIQQALHRPPSSAAQYLQQMYAAQQQHLMLHTAALQQQHLSSSQLQSLAAVQASLSSGRPSTSPTGSVTQQSSMSQTSILSASPAPAQLMNRSQTSSSTSGSITQQTMLLGSTSPTLTASQAQMYLRAQMLIFTPATTVAAVQSDIPVVSSSPSPSCQSAAAQVQNLTLRSQKLGVLSSSQNGSPKSAGQTQSLTICHNKTTVTSSKISQRDPSPESKKGGSPGLESRSTAVTRTSSIHQLIAPASYSPIQPHSLIKHQQIPLHSPPPKVSHHQLLLQQQQQQIQPITLQSPSQDPPPSQHCIPLPNHGLSPAPSNAQPQHCSPVQSHPPPLTVSPNQAQSAQQSVVVSPPPPHSPSQSPTIIIHPQALIQPHPLVSSALQTGPNLQQAAADQVQSTAQLNLPSHLPLPASPVVHIGPVQQSALVSPGQQMVSPTSHQQYSALQSSPIPIATPPQMSASPPAQLPPLPLQSMQSLQVQPEILSQGQVLVQNALVSEEELPAAEALVQLPFQTLPPPQTVAVNLQVQPPAPVDPPVVYQVEDVCEEEMPEESDECARMDRTPPPPTLSPAAVTVGRGEDLTSEHPLLEQVELPAVASVSASVIKSPSDPTHASAPAPPLLIPAASTRSSSTSLASSTPSLENKPPQAIVKPQILTHVIEGFVIQEGLEPFPVSRSSLLIEQPVKKRPLLDNQVVNSVCVQPELQNNTKHADNSSDTEIEDMMAEETLEEMDSELLKCEFCGKMGYPNEFLRSKRFCTMSCAKRYNVSCSKKFALSRWNRKPDNQSLGHRGRRPSGPEGAAREHILRQLPITYPSAEEDVASHEDPVPSAMTTRLRRQSERERERELRDVRIRKMPENSDLLPVAQTEPSIWTVDDVWAFIHSLPGCQDVADEFRAQEIDGQALLLLKEDHLMSAMNMKLGPALKICARINSLKDS</sequence>
<reference key="1">
    <citation type="journal article" date="2002" name="Hum. Genet.">
        <title>Identification and characterisation of novel mammalian homologues of Drosophila polyhomeotic permits new insights into relationships between members of the polyhomeotic family.</title>
        <authorList>
            <person name="Tonkin E."/>
            <person name="Hagan D.-M."/>
            <person name="Li W."/>
            <person name="Strachan T."/>
        </authorList>
    </citation>
    <scope>NUCLEOTIDE SEQUENCE [MRNA] (ISOFORM 1)</scope>
    <scope>TISSUE SPECIFICITY</scope>
    <source>
        <strain>C57BL/6J</strain>
    </source>
</reference>
<reference key="2">
    <citation type="journal article" date="2005" name="Science">
        <title>The transcriptional landscape of the mammalian genome.</title>
        <authorList>
            <person name="Carninci P."/>
            <person name="Kasukawa T."/>
            <person name="Katayama S."/>
            <person name="Gough J."/>
            <person name="Frith M.C."/>
            <person name="Maeda N."/>
            <person name="Oyama R."/>
            <person name="Ravasi T."/>
            <person name="Lenhard B."/>
            <person name="Wells C."/>
            <person name="Kodzius R."/>
            <person name="Shimokawa K."/>
            <person name="Bajic V.B."/>
            <person name="Brenner S.E."/>
            <person name="Batalov S."/>
            <person name="Forrest A.R."/>
            <person name="Zavolan M."/>
            <person name="Davis M.J."/>
            <person name="Wilming L.G."/>
            <person name="Aidinis V."/>
            <person name="Allen J.E."/>
            <person name="Ambesi-Impiombato A."/>
            <person name="Apweiler R."/>
            <person name="Aturaliya R.N."/>
            <person name="Bailey T.L."/>
            <person name="Bansal M."/>
            <person name="Baxter L."/>
            <person name="Beisel K.W."/>
            <person name="Bersano T."/>
            <person name="Bono H."/>
            <person name="Chalk A.M."/>
            <person name="Chiu K.P."/>
            <person name="Choudhary V."/>
            <person name="Christoffels A."/>
            <person name="Clutterbuck D.R."/>
            <person name="Crowe M.L."/>
            <person name="Dalla E."/>
            <person name="Dalrymple B.P."/>
            <person name="de Bono B."/>
            <person name="Della Gatta G."/>
            <person name="di Bernardo D."/>
            <person name="Down T."/>
            <person name="Engstrom P."/>
            <person name="Fagiolini M."/>
            <person name="Faulkner G."/>
            <person name="Fletcher C.F."/>
            <person name="Fukushima T."/>
            <person name="Furuno M."/>
            <person name="Futaki S."/>
            <person name="Gariboldi M."/>
            <person name="Georgii-Hemming P."/>
            <person name="Gingeras T.R."/>
            <person name="Gojobori T."/>
            <person name="Green R.E."/>
            <person name="Gustincich S."/>
            <person name="Harbers M."/>
            <person name="Hayashi Y."/>
            <person name="Hensch T.K."/>
            <person name="Hirokawa N."/>
            <person name="Hill D."/>
            <person name="Huminiecki L."/>
            <person name="Iacono M."/>
            <person name="Ikeo K."/>
            <person name="Iwama A."/>
            <person name="Ishikawa T."/>
            <person name="Jakt M."/>
            <person name="Kanapin A."/>
            <person name="Katoh M."/>
            <person name="Kawasawa Y."/>
            <person name="Kelso J."/>
            <person name="Kitamura H."/>
            <person name="Kitano H."/>
            <person name="Kollias G."/>
            <person name="Krishnan S.P."/>
            <person name="Kruger A."/>
            <person name="Kummerfeld S.K."/>
            <person name="Kurochkin I.V."/>
            <person name="Lareau L.F."/>
            <person name="Lazarevic D."/>
            <person name="Lipovich L."/>
            <person name="Liu J."/>
            <person name="Liuni S."/>
            <person name="McWilliam S."/>
            <person name="Madan Babu M."/>
            <person name="Madera M."/>
            <person name="Marchionni L."/>
            <person name="Matsuda H."/>
            <person name="Matsuzawa S."/>
            <person name="Miki H."/>
            <person name="Mignone F."/>
            <person name="Miyake S."/>
            <person name="Morris K."/>
            <person name="Mottagui-Tabar S."/>
            <person name="Mulder N."/>
            <person name="Nakano N."/>
            <person name="Nakauchi H."/>
            <person name="Ng P."/>
            <person name="Nilsson R."/>
            <person name="Nishiguchi S."/>
            <person name="Nishikawa S."/>
            <person name="Nori F."/>
            <person name="Ohara O."/>
            <person name="Okazaki Y."/>
            <person name="Orlando V."/>
            <person name="Pang K.C."/>
            <person name="Pavan W.J."/>
            <person name="Pavesi G."/>
            <person name="Pesole G."/>
            <person name="Petrovsky N."/>
            <person name="Piazza S."/>
            <person name="Reed J."/>
            <person name="Reid J.F."/>
            <person name="Ring B.Z."/>
            <person name="Ringwald M."/>
            <person name="Rost B."/>
            <person name="Ruan Y."/>
            <person name="Salzberg S.L."/>
            <person name="Sandelin A."/>
            <person name="Schneider C."/>
            <person name="Schoenbach C."/>
            <person name="Sekiguchi K."/>
            <person name="Semple C.A."/>
            <person name="Seno S."/>
            <person name="Sessa L."/>
            <person name="Sheng Y."/>
            <person name="Shibata Y."/>
            <person name="Shimada H."/>
            <person name="Shimada K."/>
            <person name="Silva D."/>
            <person name="Sinclair B."/>
            <person name="Sperling S."/>
            <person name="Stupka E."/>
            <person name="Sugiura K."/>
            <person name="Sultana R."/>
            <person name="Takenaka Y."/>
            <person name="Taki K."/>
            <person name="Tammoja K."/>
            <person name="Tan S.L."/>
            <person name="Tang S."/>
            <person name="Taylor M.S."/>
            <person name="Tegner J."/>
            <person name="Teichmann S.A."/>
            <person name="Ueda H.R."/>
            <person name="van Nimwegen E."/>
            <person name="Verardo R."/>
            <person name="Wei C.L."/>
            <person name="Yagi K."/>
            <person name="Yamanishi H."/>
            <person name="Zabarovsky E."/>
            <person name="Zhu S."/>
            <person name="Zimmer A."/>
            <person name="Hide W."/>
            <person name="Bult C."/>
            <person name="Grimmond S.M."/>
            <person name="Teasdale R.D."/>
            <person name="Liu E.T."/>
            <person name="Brusic V."/>
            <person name="Quackenbush J."/>
            <person name="Wahlestedt C."/>
            <person name="Mattick J.S."/>
            <person name="Hume D.A."/>
            <person name="Kai C."/>
            <person name="Sasaki D."/>
            <person name="Tomaru Y."/>
            <person name="Fukuda S."/>
            <person name="Kanamori-Katayama M."/>
            <person name="Suzuki M."/>
            <person name="Aoki J."/>
            <person name="Arakawa T."/>
            <person name="Iida J."/>
            <person name="Imamura K."/>
            <person name="Itoh M."/>
            <person name="Kato T."/>
            <person name="Kawaji H."/>
            <person name="Kawagashira N."/>
            <person name="Kawashima T."/>
            <person name="Kojima M."/>
            <person name="Kondo S."/>
            <person name="Konno H."/>
            <person name="Nakano K."/>
            <person name="Ninomiya N."/>
            <person name="Nishio T."/>
            <person name="Okada M."/>
            <person name="Plessy C."/>
            <person name="Shibata K."/>
            <person name="Shiraki T."/>
            <person name="Suzuki S."/>
            <person name="Tagami M."/>
            <person name="Waki K."/>
            <person name="Watahiki A."/>
            <person name="Okamura-Oho Y."/>
            <person name="Suzuki H."/>
            <person name="Kawai J."/>
            <person name="Hayashizaki Y."/>
        </authorList>
    </citation>
    <scope>NUCLEOTIDE SEQUENCE [LARGE SCALE MRNA] (ISOFORM 2)</scope>
    <source>
        <tissue>Mammary gland</tissue>
    </source>
</reference>
<reference key="3">
    <citation type="journal article" date="2004" name="Genome Res.">
        <title>The status, quality, and expansion of the NIH full-length cDNA project: the Mammalian Gene Collection (MGC).</title>
        <authorList>
            <consortium name="The MGC Project Team"/>
        </authorList>
    </citation>
    <scope>NUCLEOTIDE SEQUENCE [LARGE SCALE MRNA]</scope>
    <source>
        <tissue>Brain</tissue>
    </source>
</reference>
<reference key="4">
    <citation type="journal article" date="2007" name="Proc. Natl. Acad. Sci. U.S.A.">
        <title>Large-scale phosphorylation analysis of mouse liver.</title>
        <authorList>
            <person name="Villen J."/>
            <person name="Beausoleil S.A."/>
            <person name="Gerber S.A."/>
            <person name="Gygi S.P."/>
        </authorList>
    </citation>
    <scope>PHOSPHORYLATION [LARGE SCALE ANALYSIS] AT THR-607 AND SER-614</scope>
    <scope>IDENTIFICATION BY MASS SPECTROMETRY [LARGE SCALE ANALYSIS]</scope>
    <source>
        <tissue>Liver</tissue>
    </source>
</reference>
<reference key="5">
    <citation type="journal article" date="2010" name="Cell">
        <title>A tissue-specific atlas of mouse protein phosphorylation and expression.</title>
        <authorList>
            <person name="Huttlin E.L."/>
            <person name="Jedrychowski M.P."/>
            <person name="Elias J.E."/>
            <person name="Goswami T."/>
            <person name="Rad R."/>
            <person name="Beausoleil S.A."/>
            <person name="Villen J."/>
            <person name="Haas W."/>
            <person name="Sowa M.E."/>
            <person name="Gygi S.P."/>
        </authorList>
    </citation>
    <scope>PHOSPHORYLATION [LARGE SCALE ANALYSIS] AT SER-231; THR-607; SER-614 AND SER-760</scope>
    <scope>IDENTIFICATION BY MASS SPECTROMETRY [LARGE SCALE ANALYSIS]</scope>
    <source>
        <tissue>Brain</tissue>
        <tissue>Brown adipose tissue</tissue>
        <tissue>Heart</tissue>
        <tissue>Kidney</tissue>
        <tissue>Liver</tissue>
        <tissue>Lung</tissue>
        <tissue>Pancreas</tissue>
        <tissue>Spleen</tissue>
        <tissue>Testis</tissue>
    </source>
</reference>
<evidence type="ECO:0000250" key="1"/>
<evidence type="ECO:0000250" key="2">
    <source>
        <dbReference type="UniProtKB" id="Q8NDX5"/>
    </source>
</evidence>
<evidence type="ECO:0000255" key="3">
    <source>
        <dbReference type="PROSITE-ProRule" id="PRU00184"/>
    </source>
</evidence>
<evidence type="ECO:0000255" key="4">
    <source>
        <dbReference type="PROSITE-ProRule" id="PRU00367"/>
    </source>
</evidence>
<evidence type="ECO:0000256" key="5">
    <source>
        <dbReference type="SAM" id="MobiDB-lite"/>
    </source>
</evidence>
<evidence type="ECO:0000269" key="6">
    <source>
    </source>
</evidence>
<evidence type="ECO:0000303" key="7">
    <source>
    </source>
</evidence>
<evidence type="ECO:0000305" key="8"/>
<evidence type="ECO:0007744" key="9">
    <source>
    </source>
</evidence>
<evidence type="ECO:0007744" key="10">
    <source>
    </source>
</evidence>
<accession>Q8CHP6</accession>
<accession>A2RTJ9</accession>
<accession>Q3TLV5</accession>
<name>PHC3_MOUSE</name>